<keyword id="KW-0143">Chaperone</keyword>
<keyword id="KW-1015">Disulfide bond</keyword>
<keyword id="KW-0472">Membrane</keyword>
<keyword id="KW-0479">Metal-binding</keyword>
<keyword id="KW-0496">Mitochondrion</keyword>
<keyword id="KW-0999">Mitochondrion inner membrane</keyword>
<keyword id="KW-0653">Protein transport</keyword>
<keyword id="KW-1185">Reference proteome</keyword>
<keyword id="KW-0811">Translocation</keyword>
<keyword id="KW-0813">Transport</keyword>
<keyword id="KW-0862">Zinc</keyword>
<comment type="function">
    <text evidence="1">Mitochondrial intermembrane chaperone that participates in the import and insertion of some multi-pass transmembrane proteins into the mitochondrial inner membrane. Also required for the transfer of beta-barrel precursors from the TOM complex to the sorting and assembly machinery (SAM complex) of the outer membrane. Acts as a chaperone-like protein that protects the hydrophobic precursors from aggregation and guide them through the mitochondrial intermembrane space. The TIMM8-TIMM13 complex mediates the import of some proteins while the predominant TIMM9-TIMM10 70 kDa complex mediates the import of much more proteins (By similarity).</text>
</comment>
<comment type="subunit">
    <text evidence="1">Heterohexamer; composed of 3 copies of TIMM8A and 3 copies of TIMM13, named soluble 70 kDa complex. Associates with the TIM22 complex, whose core is composed of TIMM22 (By similarity).</text>
</comment>
<comment type="subcellular location">
    <subcellularLocation>
        <location evidence="1">Mitochondrion inner membrane</location>
        <topology evidence="1">Peripheral membrane protein</topology>
        <orientation evidence="1">Intermembrane side</orientation>
    </subcellularLocation>
</comment>
<comment type="domain">
    <text evidence="1">The twin CX3C motif contains 4 conserved Cys residues that form 2 disulfide bonds in the mitochondrial intermembrane space. However, during the transit of TIMM8A from cytoplasm into mitochondrion, the Cys residues probably coordinate zinc, thereby preventing folding and allowing its transfer across mitochondrial outer membrane (By similarity).</text>
</comment>
<comment type="similarity">
    <text evidence="2">Belongs to the small Tim family.</text>
</comment>
<name>TIM8A_DANRE</name>
<protein>
    <recommendedName>
        <fullName>Mitochondrial import inner membrane translocase subunit Tim8 A</fullName>
    </recommendedName>
</protein>
<sequence length="90" mass="10563">MDTQGVATDPQLQQFIEIESQKQRFQQLVHQMTEVCWEKCMDKPGPKLDSRTEVCFVNCVERFIDTSQFILNRLEQTQRSRGAFSETMTD</sequence>
<proteinExistence type="inferred from homology"/>
<organism>
    <name type="scientific">Danio rerio</name>
    <name type="common">Zebrafish</name>
    <name type="synonym">Brachydanio rerio</name>
    <dbReference type="NCBI Taxonomy" id="7955"/>
    <lineage>
        <taxon>Eukaryota</taxon>
        <taxon>Metazoa</taxon>
        <taxon>Chordata</taxon>
        <taxon>Craniata</taxon>
        <taxon>Vertebrata</taxon>
        <taxon>Euteleostomi</taxon>
        <taxon>Actinopterygii</taxon>
        <taxon>Neopterygii</taxon>
        <taxon>Teleostei</taxon>
        <taxon>Ostariophysi</taxon>
        <taxon>Cypriniformes</taxon>
        <taxon>Danionidae</taxon>
        <taxon>Danioninae</taxon>
        <taxon>Danio</taxon>
    </lineage>
</organism>
<gene>
    <name type="primary">timm8a</name>
    <name type="synonym">tim8a</name>
    <name type="ORF">zgc:100916</name>
</gene>
<accession>Q6DEM5</accession>
<reference key="1">
    <citation type="submission" date="2004-07" db="EMBL/GenBank/DDBJ databases">
        <authorList>
            <consortium name="NIH - Zebrafish Gene Collection (ZGC) project"/>
        </authorList>
    </citation>
    <scope>NUCLEOTIDE SEQUENCE [LARGE SCALE MRNA]</scope>
    <source>
        <tissue>Embryo</tissue>
    </source>
</reference>
<feature type="chain" id="PRO_0000228022" description="Mitochondrial import inner membrane translocase subunit Tim8 A">
    <location>
        <begin position="1"/>
        <end position="90"/>
    </location>
</feature>
<feature type="short sequence motif" description="Twin CX3C motif">
    <location>
        <begin position="36"/>
        <end position="59"/>
    </location>
</feature>
<feature type="disulfide bond" evidence="1">
    <location>
        <begin position="36"/>
        <end position="59"/>
    </location>
</feature>
<feature type="disulfide bond" evidence="1">
    <location>
        <begin position="40"/>
        <end position="55"/>
    </location>
</feature>
<dbReference type="EMBL" id="BC077084">
    <property type="protein sequence ID" value="AAH77084.1"/>
    <property type="molecule type" value="mRNA"/>
</dbReference>
<dbReference type="RefSeq" id="NP_001003637.1">
    <property type="nucleotide sequence ID" value="NM_001003637.3"/>
</dbReference>
<dbReference type="SMR" id="Q6DEM5"/>
<dbReference type="FunCoup" id="Q6DEM5">
    <property type="interactions" value="1388"/>
</dbReference>
<dbReference type="STRING" id="7955.ENSDARP00000043316"/>
<dbReference type="PaxDb" id="7955-ENSDARP00000043316"/>
<dbReference type="Ensembl" id="ENSDART00000043317">
    <property type="protein sequence ID" value="ENSDARP00000043316"/>
    <property type="gene ID" value="ENSDARG00000023672"/>
</dbReference>
<dbReference type="GeneID" id="445243"/>
<dbReference type="KEGG" id="dre:445243"/>
<dbReference type="AGR" id="ZFIN:ZDB-GENE-040801-158"/>
<dbReference type="CTD" id="1678"/>
<dbReference type="ZFIN" id="ZDB-GENE-040801-158">
    <property type="gene designation" value="timm8a"/>
</dbReference>
<dbReference type="eggNOG" id="KOG3489">
    <property type="taxonomic scope" value="Eukaryota"/>
</dbReference>
<dbReference type="HOGENOM" id="CLU_141397_1_2_1"/>
<dbReference type="InParanoid" id="Q6DEM5"/>
<dbReference type="OMA" id="MADATEY"/>
<dbReference type="OrthoDB" id="344165at2759"/>
<dbReference type="PhylomeDB" id="Q6DEM5"/>
<dbReference type="TreeFam" id="TF106191"/>
<dbReference type="PRO" id="PR:Q6DEM5"/>
<dbReference type="Proteomes" id="UP000000437">
    <property type="component" value="Alternate scaffold 14"/>
</dbReference>
<dbReference type="Proteomes" id="UP000000437">
    <property type="component" value="Chromosome 14"/>
</dbReference>
<dbReference type="Bgee" id="ENSDARG00000023672">
    <property type="expression patterns" value="Expressed in tail and 22 other cell types or tissues"/>
</dbReference>
<dbReference type="GO" id="GO:0005743">
    <property type="term" value="C:mitochondrial inner membrane"/>
    <property type="evidence" value="ECO:0007669"/>
    <property type="project" value="UniProtKB-SubCell"/>
</dbReference>
<dbReference type="GO" id="GO:0046872">
    <property type="term" value="F:metal ion binding"/>
    <property type="evidence" value="ECO:0007669"/>
    <property type="project" value="UniProtKB-KW"/>
</dbReference>
<dbReference type="GO" id="GO:0015031">
    <property type="term" value="P:protein transport"/>
    <property type="evidence" value="ECO:0007669"/>
    <property type="project" value="UniProtKB-KW"/>
</dbReference>
<dbReference type="FunFam" id="1.10.287.810:FF:000003">
    <property type="entry name" value="Mitochondrial import inner membrane translocase subunit TIM8"/>
    <property type="match status" value="1"/>
</dbReference>
<dbReference type="Gene3D" id="1.10.287.810">
    <property type="entry name" value="Mitochondrial import inner membrane translocase subunit tim13 like domains"/>
    <property type="match status" value="1"/>
</dbReference>
<dbReference type="InterPro" id="IPR004217">
    <property type="entry name" value="Tim10-like"/>
</dbReference>
<dbReference type="InterPro" id="IPR035427">
    <property type="entry name" value="Tim10-like_dom_sf"/>
</dbReference>
<dbReference type="Pfam" id="PF02953">
    <property type="entry name" value="zf-Tim10_DDP"/>
    <property type="match status" value="1"/>
</dbReference>
<dbReference type="SUPFAM" id="SSF144122">
    <property type="entry name" value="Tim10-like"/>
    <property type="match status" value="1"/>
</dbReference>
<evidence type="ECO:0000250" key="1"/>
<evidence type="ECO:0000305" key="2"/>